<sequence>MGQKVNPHGLRIGIIKDWDTKWYANDKNFSEYLVEDFKIRKFIKNKLYSAGISRIEIERAANKVKINVHAAKPGLIIGKGGAGIEELRKQLEKMTQKNILINITEIKVPELDAQIVAENIASQLEKRISFRRAMKQAMARAMRLGAKGIKTAVSGRIAGAEIARTEHYHEGTIPLQTLRADIDYGFAEANTTYGKLGVKVWIYKGEVLPAVKKDKGRKEEISNVNA</sequence>
<name>RS3_ACET2</name>
<organism>
    <name type="scientific">Acetivibrio thermocellus (strain ATCC 27405 / DSM 1237 / JCM 9322 / NBRC 103400 / NCIMB 10682 / NRRL B-4536 / VPI 7372)</name>
    <name type="common">Clostridium thermocellum</name>
    <dbReference type="NCBI Taxonomy" id="203119"/>
    <lineage>
        <taxon>Bacteria</taxon>
        <taxon>Bacillati</taxon>
        <taxon>Bacillota</taxon>
        <taxon>Clostridia</taxon>
        <taxon>Eubacteriales</taxon>
        <taxon>Oscillospiraceae</taxon>
        <taxon>Acetivibrio</taxon>
    </lineage>
</organism>
<gene>
    <name evidence="1" type="primary">rpsC</name>
    <name type="ordered locus">Cthe_2909</name>
</gene>
<keyword id="KW-1185">Reference proteome</keyword>
<keyword id="KW-0687">Ribonucleoprotein</keyword>
<keyword id="KW-0689">Ribosomal protein</keyword>
<keyword id="KW-0694">RNA-binding</keyword>
<keyword id="KW-0699">rRNA-binding</keyword>
<comment type="function">
    <text evidence="1">Binds the lower part of the 30S subunit head. Binds mRNA in the 70S ribosome, positioning it for translation.</text>
</comment>
<comment type="subunit">
    <text evidence="1">Part of the 30S ribosomal subunit. Forms a tight complex with proteins S10 and S14.</text>
</comment>
<comment type="similarity">
    <text evidence="1">Belongs to the universal ribosomal protein uS3 family.</text>
</comment>
<feature type="chain" id="PRO_0000293778" description="Small ribosomal subunit protein uS3">
    <location>
        <begin position="1"/>
        <end position="226"/>
    </location>
</feature>
<feature type="domain" description="KH type-2" evidence="1">
    <location>
        <begin position="39"/>
        <end position="107"/>
    </location>
</feature>
<reference key="1">
    <citation type="submission" date="2007-02" db="EMBL/GenBank/DDBJ databases">
        <title>Complete sequence of Clostridium thermocellum ATCC 27405.</title>
        <authorList>
            <consortium name="US DOE Joint Genome Institute"/>
            <person name="Copeland A."/>
            <person name="Lucas S."/>
            <person name="Lapidus A."/>
            <person name="Barry K."/>
            <person name="Detter J.C."/>
            <person name="Glavina del Rio T."/>
            <person name="Hammon N."/>
            <person name="Israni S."/>
            <person name="Dalin E."/>
            <person name="Tice H."/>
            <person name="Pitluck S."/>
            <person name="Chertkov O."/>
            <person name="Brettin T."/>
            <person name="Bruce D."/>
            <person name="Han C."/>
            <person name="Tapia R."/>
            <person name="Gilna P."/>
            <person name="Schmutz J."/>
            <person name="Larimer F."/>
            <person name="Land M."/>
            <person name="Hauser L."/>
            <person name="Kyrpides N."/>
            <person name="Mikhailova N."/>
            <person name="Wu J.H.D."/>
            <person name="Newcomb M."/>
            <person name="Richardson P."/>
        </authorList>
    </citation>
    <scope>NUCLEOTIDE SEQUENCE [LARGE SCALE GENOMIC DNA]</scope>
    <source>
        <strain>ATCC 27405 / DSM 1237 / JCM 9322 / NBRC 103400 / NCIMB 10682 / NRRL B-4536 / VPI 7372</strain>
    </source>
</reference>
<dbReference type="EMBL" id="CP000568">
    <property type="protein sequence ID" value="ABN54107.1"/>
    <property type="molecule type" value="Genomic_DNA"/>
</dbReference>
<dbReference type="RefSeq" id="WP_003514635.1">
    <property type="nucleotide sequence ID" value="NC_009012.1"/>
</dbReference>
<dbReference type="SMR" id="A3DJH8"/>
<dbReference type="STRING" id="203119.Cthe_2909"/>
<dbReference type="GeneID" id="35804436"/>
<dbReference type="KEGG" id="cth:Cthe_2909"/>
<dbReference type="eggNOG" id="COG0092">
    <property type="taxonomic scope" value="Bacteria"/>
</dbReference>
<dbReference type="HOGENOM" id="CLU_058591_0_2_9"/>
<dbReference type="OrthoDB" id="9806396at2"/>
<dbReference type="Proteomes" id="UP000002145">
    <property type="component" value="Chromosome"/>
</dbReference>
<dbReference type="GO" id="GO:0022627">
    <property type="term" value="C:cytosolic small ribosomal subunit"/>
    <property type="evidence" value="ECO:0007669"/>
    <property type="project" value="TreeGrafter"/>
</dbReference>
<dbReference type="GO" id="GO:0003729">
    <property type="term" value="F:mRNA binding"/>
    <property type="evidence" value="ECO:0007669"/>
    <property type="project" value="UniProtKB-UniRule"/>
</dbReference>
<dbReference type="GO" id="GO:0019843">
    <property type="term" value="F:rRNA binding"/>
    <property type="evidence" value="ECO:0007669"/>
    <property type="project" value="UniProtKB-UniRule"/>
</dbReference>
<dbReference type="GO" id="GO:0003735">
    <property type="term" value="F:structural constituent of ribosome"/>
    <property type="evidence" value="ECO:0007669"/>
    <property type="project" value="InterPro"/>
</dbReference>
<dbReference type="GO" id="GO:0006412">
    <property type="term" value="P:translation"/>
    <property type="evidence" value="ECO:0007669"/>
    <property type="project" value="UniProtKB-UniRule"/>
</dbReference>
<dbReference type="CDD" id="cd02412">
    <property type="entry name" value="KH-II_30S_S3"/>
    <property type="match status" value="1"/>
</dbReference>
<dbReference type="FunFam" id="3.30.1140.32:FF:000002">
    <property type="entry name" value="30S ribosomal protein S3"/>
    <property type="match status" value="1"/>
</dbReference>
<dbReference type="FunFam" id="3.30.300.20:FF:000001">
    <property type="entry name" value="30S ribosomal protein S3"/>
    <property type="match status" value="1"/>
</dbReference>
<dbReference type="Gene3D" id="3.30.300.20">
    <property type="match status" value="1"/>
</dbReference>
<dbReference type="Gene3D" id="3.30.1140.32">
    <property type="entry name" value="Ribosomal protein S3, C-terminal domain"/>
    <property type="match status" value="1"/>
</dbReference>
<dbReference type="HAMAP" id="MF_01309_B">
    <property type="entry name" value="Ribosomal_uS3_B"/>
    <property type="match status" value="1"/>
</dbReference>
<dbReference type="InterPro" id="IPR004087">
    <property type="entry name" value="KH_dom"/>
</dbReference>
<dbReference type="InterPro" id="IPR015946">
    <property type="entry name" value="KH_dom-like_a/b"/>
</dbReference>
<dbReference type="InterPro" id="IPR004044">
    <property type="entry name" value="KH_dom_type_2"/>
</dbReference>
<dbReference type="InterPro" id="IPR009019">
    <property type="entry name" value="KH_sf_prok-type"/>
</dbReference>
<dbReference type="InterPro" id="IPR036419">
    <property type="entry name" value="Ribosomal_S3_C_sf"/>
</dbReference>
<dbReference type="InterPro" id="IPR005704">
    <property type="entry name" value="Ribosomal_uS3_bac-typ"/>
</dbReference>
<dbReference type="InterPro" id="IPR001351">
    <property type="entry name" value="Ribosomal_uS3_C"/>
</dbReference>
<dbReference type="InterPro" id="IPR018280">
    <property type="entry name" value="Ribosomal_uS3_CS"/>
</dbReference>
<dbReference type="NCBIfam" id="TIGR01009">
    <property type="entry name" value="rpsC_bact"/>
    <property type="match status" value="1"/>
</dbReference>
<dbReference type="PANTHER" id="PTHR11760">
    <property type="entry name" value="30S/40S RIBOSOMAL PROTEIN S3"/>
    <property type="match status" value="1"/>
</dbReference>
<dbReference type="PANTHER" id="PTHR11760:SF19">
    <property type="entry name" value="SMALL RIBOSOMAL SUBUNIT PROTEIN US3C"/>
    <property type="match status" value="1"/>
</dbReference>
<dbReference type="Pfam" id="PF07650">
    <property type="entry name" value="KH_2"/>
    <property type="match status" value="1"/>
</dbReference>
<dbReference type="Pfam" id="PF00189">
    <property type="entry name" value="Ribosomal_S3_C"/>
    <property type="match status" value="1"/>
</dbReference>
<dbReference type="SMART" id="SM00322">
    <property type="entry name" value="KH"/>
    <property type="match status" value="1"/>
</dbReference>
<dbReference type="SUPFAM" id="SSF54814">
    <property type="entry name" value="Prokaryotic type KH domain (KH-domain type II)"/>
    <property type="match status" value="1"/>
</dbReference>
<dbReference type="SUPFAM" id="SSF54821">
    <property type="entry name" value="Ribosomal protein S3 C-terminal domain"/>
    <property type="match status" value="1"/>
</dbReference>
<dbReference type="PROSITE" id="PS50823">
    <property type="entry name" value="KH_TYPE_2"/>
    <property type="match status" value="1"/>
</dbReference>
<dbReference type="PROSITE" id="PS00548">
    <property type="entry name" value="RIBOSOMAL_S3"/>
    <property type="match status" value="1"/>
</dbReference>
<accession>A3DJH8</accession>
<proteinExistence type="inferred from homology"/>
<evidence type="ECO:0000255" key="1">
    <source>
        <dbReference type="HAMAP-Rule" id="MF_01309"/>
    </source>
</evidence>
<evidence type="ECO:0000305" key="2"/>
<protein>
    <recommendedName>
        <fullName evidence="1">Small ribosomal subunit protein uS3</fullName>
    </recommendedName>
    <alternativeName>
        <fullName evidence="2">30S ribosomal protein S3</fullName>
    </alternativeName>
</protein>